<feature type="chain" id="PRO_0000070939" description="Chaperone protein DnaJ">
    <location>
        <begin position="1"/>
        <end position="376"/>
    </location>
</feature>
<feature type="domain" description="J" evidence="1">
    <location>
        <begin position="5"/>
        <end position="70"/>
    </location>
</feature>
<feature type="repeat" description="CXXCXGXG motif">
    <location>
        <begin position="145"/>
        <end position="152"/>
    </location>
</feature>
<feature type="repeat" description="CXXCXGXG motif">
    <location>
        <begin position="161"/>
        <end position="168"/>
    </location>
</feature>
<feature type="repeat" description="CXXCXGXG motif">
    <location>
        <begin position="183"/>
        <end position="190"/>
    </location>
</feature>
<feature type="repeat" description="CXXCXGXG motif">
    <location>
        <begin position="197"/>
        <end position="204"/>
    </location>
</feature>
<feature type="zinc finger region" description="CR-type" evidence="1">
    <location>
        <begin position="132"/>
        <end position="209"/>
    </location>
</feature>
<feature type="binding site" evidence="1">
    <location>
        <position position="145"/>
    </location>
    <ligand>
        <name>Zn(2+)</name>
        <dbReference type="ChEBI" id="CHEBI:29105"/>
        <label>1</label>
    </ligand>
</feature>
<feature type="binding site" evidence="1">
    <location>
        <position position="148"/>
    </location>
    <ligand>
        <name>Zn(2+)</name>
        <dbReference type="ChEBI" id="CHEBI:29105"/>
        <label>1</label>
    </ligand>
</feature>
<feature type="binding site" evidence="1">
    <location>
        <position position="161"/>
    </location>
    <ligand>
        <name>Zn(2+)</name>
        <dbReference type="ChEBI" id="CHEBI:29105"/>
        <label>2</label>
    </ligand>
</feature>
<feature type="binding site" evidence="1">
    <location>
        <position position="164"/>
    </location>
    <ligand>
        <name>Zn(2+)</name>
        <dbReference type="ChEBI" id="CHEBI:29105"/>
        <label>2</label>
    </ligand>
</feature>
<feature type="binding site" evidence="1">
    <location>
        <position position="183"/>
    </location>
    <ligand>
        <name>Zn(2+)</name>
        <dbReference type="ChEBI" id="CHEBI:29105"/>
        <label>2</label>
    </ligand>
</feature>
<feature type="binding site" evidence="1">
    <location>
        <position position="186"/>
    </location>
    <ligand>
        <name>Zn(2+)</name>
        <dbReference type="ChEBI" id="CHEBI:29105"/>
        <label>2</label>
    </ligand>
</feature>
<feature type="binding site" evidence="1">
    <location>
        <position position="197"/>
    </location>
    <ligand>
        <name>Zn(2+)</name>
        <dbReference type="ChEBI" id="CHEBI:29105"/>
        <label>1</label>
    </ligand>
</feature>
<feature type="binding site" evidence="1">
    <location>
        <position position="200"/>
    </location>
    <ligand>
        <name>Zn(2+)</name>
        <dbReference type="ChEBI" id="CHEBI:29105"/>
        <label>1</label>
    </ligand>
</feature>
<protein>
    <recommendedName>
        <fullName evidence="1">Chaperone protein DnaJ</fullName>
    </recommendedName>
</protein>
<evidence type="ECO:0000255" key="1">
    <source>
        <dbReference type="HAMAP-Rule" id="MF_01152"/>
    </source>
</evidence>
<keyword id="KW-0143">Chaperone</keyword>
<keyword id="KW-0963">Cytoplasm</keyword>
<keyword id="KW-0235">DNA replication</keyword>
<keyword id="KW-0479">Metal-binding</keyword>
<keyword id="KW-1185">Reference proteome</keyword>
<keyword id="KW-0677">Repeat</keyword>
<keyword id="KW-0346">Stress response</keyword>
<keyword id="KW-0862">Zinc</keyword>
<keyword id="KW-0863">Zinc-finger</keyword>
<gene>
    <name evidence="1" type="primary">dnaJ</name>
    <name type="ordered locus">XOO2032</name>
</gene>
<proteinExistence type="inferred from homology"/>
<accession>Q5H185</accession>
<comment type="function">
    <text evidence="1">Participates actively in the response to hyperosmotic and heat shock by preventing the aggregation of stress-denatured proteins and by disaggregating proteins, also in an autonomous, DnaK-independent fashion. Unfolded proteins bind initially to DnaJ; upon interaction with the DnaJ-bound protein, DnaK hydrolyzes its bound ATP, resulting in the formation of a stable complex. GrpE releases ADP from DnaK; ATP binding to DnaK triggers the release of the substrate protein, thus completing the reaction cycle. Several rounds of ATP-dependent interactions between DnaJ, DnaK and GrpE are required for fully efficient folding. Also involved, together with DnaK and GrpE, in the DNA replication of plasmids through activation of initiation proteins.</text>
</comment>
<comment type="cofactor">
    <cofactor evidence="1">
        <name>Zn(2+)</name>
        <dbReference type="ChEBI" id="CHEBI:29105"/>
    </cofactor>
    <text evidence="1">Binds 2 Zn(2+) ions per monomer.</text>
</comment>
<comment type="subunit">
    <text evidence="1">Homodimer.</text>
</comment>
<comment type="subcellular location">
    <subcellularLocation>
        <location evidence="1">Cytoplasm</location>
    </subcellularLocation>
</comment>
<comment type="domain">
    <text evidence="1">The J domain is necessary and sufficient to stimulate DnaK ATPase activity. Zinc center 1 plays an important role in the autonomous, DnaK-independent chaperone activity of DnaJ. Zinc center 2 is essential for interaction with DnaK and for DnaJ activity.</text>
</comment>
<comment type="similarity">
    <text evidence="1">Belongs to the DnaJ family.</text>
</comment>
<name>DNAJ_XANOR</name>
<sequence length="376" mass="40420">MSKRDYYEVLGVARGASDEELKKAYRRCAMKHHPDRNPGDAAAEAAFKECKEAYEVLSDGNKRRAYDAHGHAAFEHGMGGGGGGPGSPDMGDIFGDIFGNIFGGGAAGPRAARRGADVGYVLELDLEEAVAGIERRIEIPTLIECVSCHGSGSEDGKVQTCGTCHGRGQVRIQRGIFAMQQSCPHCDGRGTLIQNPCKTCHGAGRVEENKVLSIKVPAGVDTGDRIRLAGEGEAGPAGTPPGDLYVEVRVREHAIFQRDGDDLHCEVPIRISQAALGDTVRVATLGGEAEIRIPAETQTGKLFRLRGKGVRSVRSRSEGDLYCRVVVETPVNLTADQRELLQQFEATFTGEDARKHSPKSATFIDGVKGFWDRMTS</sequence>
<reference key="1">
    <citation type="journal article" date="2005" name="Nucleic Acids Res.">
        <title>The genome sequence of Xanthomonas oryzae pathovar oryzae KACC10331, the bacterial blight pathogen of rice.</title>
        <authorList>
            <person name="Lee B.-M."/>
            <person name="Park Y.-J."/>
            <person name="Park D.-S."/>
            <person name="Kang H.-W."/>
            <person name="Kim J.-G."/>
            <person name="Song E.-S."/>
            <person name="Park I.-C."/>
            <person name="Yoon U.-H."/>
            <person name="Hahn J.-H."/>
            <person name="Koo B.-S."/>
            <person name="Lee G.-B."/>
            <person name="Kim H."/>
            <person name="Park H.-S."/>
            <person name="Yoon K.-O."/>
            <person name="Kim J.-H."/>
            <person name="Jung C.-H."/>
            <person name="Koh N.-H."/>
            <person name="Seo J.-S."/>
            <person name="Go S.-J."/>
        </authorList>
    </citation>
    <scope>NUCLEOTIDE SEQUENCE [LARGE SCALE GENOMIC DNA]</scope>
    <source>
        <strain>KACC10331 / KXO85</strain>
    </source>
</reference>
<organism>
    <name type="scientific">Xanthomonas oryzae pv. oryzae (strain KACC10331 / KXO85)</name>
    <dbReference type="NCBI Taxonomy" id="291331"/>
    <lineage>
        <taxon>Bacteria</taxon>
        <taxon>Pseudomonadati</taxon>
        <taxon>Pseudomonadota</taxon>
        <taxon>Gammaproteobacteria</taxon>
        <taxon>Lysobacterales</taxon>
        <taxon>Lysobacteraceae</taxon>
        <taxon>Xanthomonas</taxon>
    </lineage>
</organism>
<dbReference type="EMBL" id="AE013598">
    <property type="protein sequence ID" value="AAW75286.1"/>
    <property type="molecule type" value="Genomic_DNA"/>
</dbReference>
<dbReference type="SMR" id="Q5H185"/>
<dbReference type="STRING" id="291331.XOO2032"/>
<dbReference type="KEGG" id="xoo:XOO2032"/>
<dbReference type="HOGENOM" id="CLU_017633_0_7_6"/>
<dbReference type="Proteomes" id="UP000006735">
    <property type="component" value="Chromosome"/>
</dbReference>
<dbReference type="GO" id="GO:0005737">
    <property type="term" value="C:cytoplasm"/>
    <property type="evidence" value="ECO:0007669"/>
    <property type="project" value="UniProtKB-SubCell"/>
</dbReference>
<dbReference type="GO" id="GO:0005524">
    <property type="term" value="F:ATP binding"/>
    <property type="evidence" value="ECO:0007669"/>
    <property type="project" value="InterPro"/>
</dbReference>
<dbReference type="GO" id="GO:0031072">
    <property type="term" value="F:heat shock protein binding"/>
    <property type="evidence" value="ECO:0007669"/>
    <property type="project" value="InterPro"/>
</dbReference>
<dbReference type="GO" id="GO:0051082">
    <property type="term" value="F:unfolded protein binding"/>
    <property type="evidence" value="ECO:0007669"/>
    <property type="project" value="UniProtKB-UniRule"/>
</dbReference>
<dbReference type="GO" id="GO:0008270">
    <property type="term" value="F:zinc ion binding"/>
    <property type="evidence" value="ECO:0007669"/>
    <property type="project" value="UniProtKB-UniRule"/>
</dbReference>
<dbReference type="GO" id="GO:0051085">
    <property type="term" value="P:chaperone cofactor-dependent protein refolding"/>
    <property type="evidence" value="ECO:0007669"/>
    <property type="project" value="TreeGrafter"/>
</dbReference>
<dbReference type="GO" id="GO:0006260">
    <property type="term" value="P:DNA replication"/>
    <property type="evidence" value="ECO:0007669"/>
    <property type="project" value="UniProtKB-KW"/>
</dbReference>
<dbReference type="GO" id="GO:0042026">
    <property type="term" value="P:protein refolding"/>
    <property type="evidence" value="ECO:0007669"/>
    <property type="project" value="TreeGrafter"/>
</dbReference>
<dbReference type="GO" id="GO:0009408">
    <property type="term" value="P:response to heat"/>
    <property type="evidence" value="ECO:0007669"/>
    <property type="project" value="InterPro"/>
</dbReference>
<dbReference type="CDD" id="cd06257">
    <property type="entry name" value="DnaJ"/>
    <property type="match status" value="1"/>
</dbReference>
<dbReference type="CDD" id="cd10747">
    <property type="entry name" value="DnaJ_C"/>
    <property type="match status" value="1"/>
</dbReference>
<dbReference type="CDD" id="cd10719">
    <property type="entry name" value="DnaJ_zf"/>
    <property type="match status" value="1"/>
</dbReference>
<dbReference type="FunFam" id="1.10.287.110:FF:000099">
    <property type="entry name" value="Chaperone protein DnaJ"/>
    <property type="match status" value="1"/>
</dbReference>
<dbReference type="FunFam" id="2.10.230.10:FF:000002">
    <property type="entry name" value="Molecular chaperone DnaJ"/>
    <property type="match status" value="1"/>
</dbReference>
<dbReference type="FunFam" id="2.60.260.20:FF:000004">
    <property type="entry name" value="Molecular chaperone DnaJ"/>
    <property type="match status" value="1"/>
</dbReference>
<dbReference type="Gene3D" id="1.10.287.110">
    <property type="entry name" value="DnaJ domain"/>
    <property type="match status" value="1"/>
</dbReference>
<dbReference type="Gene3D" id="2.10.230.10">
    <property type="entry name" value="Heat shock protein DnaJ, cysteine-rich domain"/>
    <property type="match status" value="1"/>
</dbReference>
<dbReference type="Gene3D" id="2.60.260.20">
    <property type="entry name" value="Urease metallochaperone UreE, N-terminal domain"/>
    <property type="match status" value="2"/>
</dbReference>
<dbReference type="HAMAP" id="MF_01152">
    <property type="entry name" value="DnaJ"/>
    <property type="match status" value="1"/>
</dbReference>
<dbReference type="InterPro" id="IPR012724">
    <property type="entry name" value="DnaJ"/>
</dbReference>
<dbReference type="InterPro" id="IPR002939">
    <property type="entry name" value="DnaJ_C"/>
</dbReference>
<dbReference type="InterPro" id="IPR001623">
    <property type="entry name" value="DnaJ_domain"/>
</dbReference>
<dbReference type="InterPro" id="IPR008971">
    <property type="entry name" value="HSP40/DnaJ_pept-bd"/>
</dbReference>
<dbReference type="InterPro" id="IPR001305">
    <property type="entry name" value="HSP_DnaJ_Cys-rich_dom"/>
</dbReference>
<dbReference type="InterPro" id="IPR036410">
    <property type="entry name" value="HSP_DnaJ_Cys-rich_dom_sf"/>
</dbReference>
<dbReference type="InterPro" id="IPR036869">
    <property type="entry name" value="J_dom_sf"/>
</dbReference>
<dbReference type="NCBIfam" id="TIGR02349">
    <property type="entry name" value="DnaJ_bact"/>
    <property type="match status" value="1"/>
</dbReference>
<dbReference type="NCBIfam" id="NF008035">
    <property type="entry name" value="PRK10767.1"/>
    <property type="match status" value="1"/>
</dbReference>
<dbReference type="PANTHER" id="PTHR43096:SF48">
    <property type="entry name" value="CHAPERONE PROTEIN DNAJ"/>
    <property type="match status" value="1"/>
</dbReference>
<dbReference type="PANTHER" id="PTHR43096">
    <property type="entry name" value="DNAJ HOMOLOG 1, MITOCHONDRIAL-RELATED"/>
    <property type="match status" value="1"/>
</dbReference>
<dbReference type="Pfam" id="PF00226">
    <property type="entry name" value="DnaJ"/>
    <property type="match status" value="1"/>
</dbReference>
<dbReference type="Pfam" id="PF01556">
    <property type="entry name" value="DnaJ_C"/>
    <property type="match status" value="1"/>
</dbReference>
<dbReference type="Pfam" id="PF00684">
    <property type="entry name" value="DnaJ_CXXCXGXG"/>
    <property type="match status" value="1"/>
</dbReference>
<dbReference type="PRINTS" id="PR00625">
    <property type="entry name" value="JDOMAIN"/>
</dbReference>
<dbReference type="SMART" id="SM00271">
    <property type="entry name" value="DnaJ"/>
    <property type="match status" value="1"/>
</dbReference>
<dbReference type="SUPFAM" id="SSF46565">
    <property type="entry name" value="Chaperone J-domain"/>
    <property type="match status" value="1"/>
</dbReference>
<dbReference type="SUPFAM" id="SSF57938">
    <property type="entry name" value="DnaJ/Hsp40 cysteine-rich domain"/>
    <property type="match status" value="1"/>
</dbReference>
<dbReference type="SUPFAM" id="SSF49493">
    <property type="entry name" value="HSP40/DnaJ peptide-binding domain"/>
    <property type="match status" value="2"/>
</dbReference>
<dbReference type="PROSITE" id="PS50076">
    <property type="entry name" value="DNAJ_2"/>
    <property type="match status" value="1"/>
</dbReference>
<dbReference type="PROSITE" id="PS51188">
    <property type="entry name" value="ZF_CR"/>
    <property type="match status" value="1"/>
</dbReference>